<feature type="chain" id="PRO_0000309155" description="Serine/threonine transporter SstT">
    <location>
        <begin position="1"/>
        <end position="406"/>
    </location>
</feature>
<feature type="transmembrane region" description="Helical" evidence="1">
    <location>
        <begin position="15"/>
        <end position="35"/>
    </location>
</feature>
<feature type="transmembrane region" description="Helical" evidence="1">
    <location>
        <begin position="47"/>
        <end position="67"/>
    </location>
</feature>
<feature type="transmembrane region" description="Helical" evidence="1">
    <location>
        <begin position="81"/>
        <end position="101"/>
    </location>
</feature>
<feature type="transmembrane region" description="Helical" evidence="1">
    <location>
        <begin position="140"/>
        <end position="160"/>
    </location>
</feature>
<feature type="transmembrane region" description="Helical" evidence="1">
    <location>
        <begin position="191"/>
        <end position="211"/>
    </location>
</feature>
<feature type="transmembrane region" description="Helical" evidence="1">
    <location>
        <begin position="215"/>
        <end position="235"/>
    </location>
</feature>
<feature type="transmembrane region" description="Helical" evidence="1">
    <location>
        <begin position="289"/>
        <end position="309"/>
    </location>
</feature>
<feature type="transmembrane region" description="Helical" evidence="1">
    <location>
        <begin position="315"/>
        <end position="335"/>
    </location>
</feature>
<feature type="transmembrane region" description="Helical" evidence="1">
    <location>
        <begin position="362"/>
        <end position="382"/>
    </location>
</feature>
<sequence length="406" mass="42153">MQHNSLIARFAQGNLVLQILVGIILGISLALVSPSSAESVGMLGSLFVGALKAIAPILVFILVAASIANQKKNQHTHMRPIIAMYLAGTFFAALTAVVLSFMFPTTLTLVTGAEGANPPQGILEVIKTLLFKLVDNPVNALMSANYIGILAWGVGLGLALHHASDTTKAVFEDLSHSVSHIVRFIIRLAPFGIFGLVASTFATTGFDALAGYAHLLVVLLSAMAIIALIVNPAMVYVKTKQNPYPLVFQCLRESGVTAFFTRSSAANIPVNMALCEKLKLDEDTYSVSIPLGATINMAGAAITITTLTLAAVHTMGIEVDLMTAILLSVVAAVSACGASGVAGGSLLLIPLACGLFGISNDIAMQVVAVGFIIGVIQDSAETALNSSTDVVFTAAVCESEAQKAKG</sequence>
<accession>Q8D4Q1</accession>
<organism>
    <name type="scientific">Vibrio vulnificus (strain CMCP6)</name>
    <dbReference type="NCBI Taxonomy" id="216895"/>
    <lineage>
        <taxon>Bacteria</taxon>
        <taxon>Pseudomonadati</taxon>
        <taxon>Pseudomonadota</taxon>
        <taxon>Gammaproteobacteria</taxon>
        <taxon>Vibrionales</taxon>
        <taxon>Vibrionaceae</taxon>
        <taxon>Vibrio</taxon>
    </lineage>
</organism>
<keyword id="KW-0029">Amino-acid transport</keyword>
<keyword id="KW-0997">Cell inner membrane</keyword>
<keyword id="KW-1003">Cell membrane</keyword>
<keyword id="KW-0472">Membrane</keyword>
<keyword id="KW-0769">Symport</keyword>
<keyword id="KW-0812">Transmembrane</keyword>
<keyword id="KW-1133">Transmembrane helix</keyword>
<keyword id="KW-0813">Transport</keyword>
<dbReference type="EMBL" id="AE016796">
    <property type="protein sequence ID" value="AAO08135.1"/>
    <property type="molecule type" value="Genomic_DNA"/>
</dbReference>
<dbReference type="RefSeq" id="WP_011082130.1">
    <property type="nucleotide sequence ID" value="NC_004460.2"/>
</dbReference>
<dbReference type="SMR" id="Q8D4Q1"/>
<dbReference type="KEGG" id="vvu:VV2_1238"/>
<dbReference type="HOGENOM" id="CLU_044581_0_0_6"/>
<dbReference type="Proteomes" id="UP000002275">
    <property type="component" value="Chromosome 2"/>
</dbReference>
<dbReference type="GO" id="GO:0005886">
    <property type="term" value="C:plasma membrane"/>
    <property type="evidence" value="ECO:0007669"/>
    <property type="project" value="UniProtKB-SubCell"/>
</dbReference>
<dbReference type="GO" id="GO:0005295">
    <property type="term" value="F:neutral L-amino acid:sodium symporter activity"/>
    <property type="evidence" value="ECO:0007669"/>
    <property type="project" value="TreeGrafter"/>
</dbReference>
<dbReference type="GO" id="GO:0032329">
    <property type="term" value="P:serine transport"/>
    <property type="evidence" value="ECO:0007669"/>
    <property type="project" value="InterPro"/>
</dbReference>
<dbReference type="GO" id="GO:0015826">
    <property type="term" value="P:threonine transport"/>
    <property type="evidence" value="ECO:0007669"/>
    <property type="project" value="InterPro"/>
</dbReference>
<dbReference type="FunFam" id="1.10.3860.10:FF:000003">
    <property type="entry name" value="Serine/threonine transporter sstT"/>
    <property type="match status" value="1"/>
</dbReference>
<dbReference type="Gene3D" id="1.10.3860.10">
    <property type="entry name" value="Sodium:dicarboxylate symporter"/>
    <property type="match status" value="1"/>
</dbReference>
<dbReference type="HAMAP" id="MF_01582">
    <property type="entry name" value="Ser_Thr_transp_SstT"/>
    <property type="match status" value="1"/>
</dbReference>
<dbReference type="InterPro" id="IPR001991">
    <property type="entry name" value="Na-dicarboxylate_symporter"/>
</dbReference>
<dbReference type="InterPro" id="IPR036458">
    <property type="entry name" value="Na:dicarbo_symporter_sf"/>
</dbReference>
<dbReference type="InterPro" id="IPR023025">
    <property type="entry name" value="Ser_Thr_transp_SstT"/>
</dbReference>
<dbReference type="NCBIfam" id="NF010151">
    <property type="entry name" value="PRK13628.1"/>
    <property type="match status" value="1"/>
</dbReference>
<dbReference type="PANTHER" id="PTHR42865">
    <property type="entry name" value="PROTON/GLUTAMATE-ASPARTATE SYMPORTER"/>
    <property type="match status" value="1"/>
</dbReference>
<dbReference type="PANTHER" id="PTHR42865:SF8">
    <property type="entry name" value="SERINE_THREONINE TRANSPORTER SSTT"/>
    <property type="match status" value="1"/>
</dbReference>
<dbReference type="Pfam" id="PF00375">
    <property type="entry name" value="SDF"/>
    <property type="match status" value="1"/>
</dbReference>
<dbReference type="PRINTS" id="PR00173">
    <property type="entry name" value="EDTRNSPORT"/>
</dbReference>
<dbReference type="SUPFAM" id="SSF118215">
    <property type="entry name" value="Proton glutamate symport protein"/>
    <property type="match status" value="1"/>
</dbReference>
<reference key="1">
    <citation type="submission" date="2002-12" db="EMBL/GenBank/DDBJ databases">
        <title>Complete genome sequence of Vibrio vulnificus CMCP6.</title>
        <authorList>
            <person name="Rhee J.H."/>
            <person name="Kim S.Y."/>
            <person name="Chung S.S."/>
            <person name="Kim J.J."/>
            <person name="Moon Y.H."/>
            <person name="Jeong H."/>
            <person name="Choy H.E."/>
        </authorList>
    </citation>
    <scope>NUCLEOTIDE SEQUENCE [LARGE SCALE GENOMIC DNA]</scope>
    <source>
        <strain>CMCP6</strain>
    </source>
</reference>
<comment type="function">
    <text evidence="1">Involved in the import of serine and threonine into the cell, with the concomitant import of sodium (symport system).</text>
</comment>
<comment type="catalytic activity">
    <reaction evidence="1">
        <text>L-serine(in) + Na(+)(in) = L-serine(out) + Na(+)(out)</text>
        <dbReference type="Rhea" id="RHEA:29575"/>
        <dbReference type="ChEBI" id="CHEBI:29101"/>
        <dbReference type="ChEBI" id="CHEBI:33384"/>
    </reaction>
    <physiologicalReaction direction="right-to-left" evidence="1">
        <dbReference type="Rhea" id="RHEA:29577"/>
    </physiologicalReaction>
</comment>
<comment type="catalytic activity">
    <reaction evidence="1">
        <text>L-threonine(in) + Na(+)(in) = L-threonine(out) + Na(+)(out)</text>
        <dbReference type="Rhea" id="RHEA:69999"/>
        <dbReference type="ChEBI" id="CHEBI:29101"/>
        <dbReference type="ChEBI" id="CHEBI:57926"/>
    </reaction>
    <physiologicalReaction direction="right-to-left" evidence="1">
        <dbReference type="Rhea" id="RHEA:70001"/>
    </physiologicalReaction>
</comment>
<comment type="subcellular location">
    <subcellularLocation>
        <location evidence="1">Cell inner membrane</location>
        <topology evidence="1">Multi-pass membrane protein</topology>
    </subcellularLocation>
</comment>
<comment type="similarity">
    <text evidence="1">Belongs to the dicarboxylate/amino acid:cation symporter (DAACS) (TC 2.A.23) family.</text>
</comment>
<protein>
    <recommendedName>
        <fullName evidence="1">Serine/threonine transporter SstT</fullName>
    </recommendedName>
    <alternativeName>
        <fullName evidence="1">Na(+)/serine-threonine symporter</fullName>
    </alternativeName>
</protein>
<name>SSTT_VIBVU</name>
<proteinExistence type="inferred from homology"/>
<evidence type="ECO:0000255" key="1">
    <source>
        <dbReference type="HAMAP-Rule" id="MF_01582"/>
    </source>
</evidence>
<gene>
    <name evidence="1" type="primary">sstT</name>
    <name type="ordered locus">VV2_1238</name>
</gene>